<reference key="1">
    <citation type="journal article" date="2004" name="Science">
        <title>The complete genome sequence of Propionibacterium acnes, a commensal of human skin.</title>
        <authorList>
            <person name="Brueggemann H."/>
            <person name="Henne A."/>
            <person name="Hoster F."/>
            <person name="Liesegang H."/>
            <person name="Wiezer A."/>
            <person name="Strittmatter A."/>
            <person name="Hujer S."/>
            <person name="Duerre P."/>
            <person name="Gottschalk G."/>
        </authorList>
    </citation>
    <scope>NUCLEOTIDE SEQUENCE [LARGE SCALE GENOMIC DNA]</scope>
    <source>
        <strain>DSM 16379 / KPA171202</strain>
    </source>
</reference>
<dbReference type="EC" id="3.1.-.-" evidence="1"/>
<dbReference type="EMBL" id="AE017283">
    <property type="protein sequence ID" value="AAT82766.1"/>
    <property type="molecule type" value="Genomic_DNA"/>
</dbReference>
<dbReference type="SMR" id="Q6A900"/>
<dbReference type="EnsemblBacteria" id="AAT82766">
    <property type="protein sequence ID" value="AAT82766"/>
    <property type="gene ID" value="PPA1014"/>
</dbReference>
<dbReference type="KEGG" id="pac:PPA1014"/>
<dbReference type="eggNOG" id="COG1418">
    <property type="taxonomic scope" value="Bacteria"/>
</dbReference>
<dbReference type="HOGENOM" id="CLU_028328_1_0_11"/>
<dbReference type="Proteomes" id="UP000000603">
    <property type="component" value="Chromosome"/>
</dbReference>
<dbReference type="GO" id="GO:0005886">
    <property type="term" value="C:plasma membrane"/>
    <property type="evidence" value="ECO:0007669"/>
    <property type="project" value="UniProtKB-SubCell"/>
</dbReference>
<dbReference type="GO" id="GO:0003723">
    <property type="term" value="F:RNA binding"/>
    <property type="evidence" value="ECO:0007669"/>
    <property type="project" value="UniProtKB-UniRule"/>
</dbReference>
<dbReference type="GO" id="GO:0004521">
    <property type="term" value="F:RNA endonuclease activity"/>
    <property type="evidence" value="ECO:0007669"/>
    <property type="project" value="UniProtKB-UniRule"/>
</dbReference>
<dbReference type="GO" id="GO:0006402">
    <property type="term" value="P:mRNA catabolic process"/>
    <property type="evidence" value="ECO:0007669"/>
    <property type="project" value="UniProtKB-UniRule"/>
</dbReference>
<dbReference type="CDD" id="cd00077">
    <property type="entry name" value="HDc"/>
    <property type="match status" value="1"/>
</dbReference>
<dbReference type="CDD" id="cd22431">
    <property type="entry name" value="KH-I_RNaseY"/>
    <property type="match status" value="1"/>
</dbReference>
<dbReference type="Gene3D" id="3.30.310.210">
    <property type="match status" value="1"/>
</dbReference>
<dbReference type="Gene3D" id="1.10.3210.10">
    <property type="entry name" value="Hypothetical protein af1432"/>
    <property type="match status" value="1"/>
</dbReference>
<dbReference type="HAMAP" id="MF_00335">
    <property type="entry name" value="RNase_Y"/>
    <property type="match status" value="1"/>
</dbReference>
<dbReference type="InterPro" id="IPR003607">
    <property type="entry name" value="HD/PDEase_dom"/>
</dbReference>
<dbReference type="InterPro" id="IPR006674">
    <property type="entry name" value="HD_domain"/>
</dbReference>
<dbReference type="InterPro" id="IPR006675">
    <property type="entry name" value="HDIG_dom"/>
</dbReference>
<dbReference type="InterPro" id="IPR004087">
    <property type="entry name" value="KH_dom"/>
</dbReference>
<dbReference type="InterPro" id="IPR004088">
    <property type="entry name" value="KH_dom_type_1"/>
</dbReference>
<dbReference type="InterPro" id="IPR036612">
    <property type="entry name" value="KH_dom_type_1_sf"/>
</dbReference>
<dbReference type="InterPro" id="IPR017705">
    <property type="entry name" value="Ribonuclease_Y"/>
</dbReference>
<dbReference type="InterPro" id="IPR022711">
    <property type="entry name" value="RNase_Y_N"/>
</dbReference>
<dbReference type="NCBIfam" id="TIGR00277">
    <property type="entry name" value="HDIG"/>
    <property type="match status" value="1"/>
</dbReference>
<dbReference type="NCBIfam" id="TIGR03319">
    <property type="entry name" value="RNase_Y"/>
    <property type="match status" value="1"/>
</dbReference>
<dbReference type="PANTHER" id="PTHR12826">
    <property type="entry name" value="RIBONUCLEASE Y"/>
    <property type="match status" value="1"/>
</dbReference>
<dbReference type="PANTHER" id="PTHR12826:SF15">
    <property type="entry name" value="RIBONUCLEASE Y"/>
    <property type="match status" value="1"/>
</dbReference>
<dbReference type="Pfam" id="PF01966">
    <property type="entry name" value="HD"/>
    <property type="match status" value="1"/>
</dbReference>
<dbReference type="Pfam" id="PF00013">
    <property type="entry name" value="KH_1"/>
    <property type="match status" value="1"/>
</dbReference>
<dbReference type="Pfam" id="PF12072">
    <property type="entry name" value="RNase_Y_N"/>
    <property type="match status" value="1"/>
</dbReference>
<dbReference type="SMART" id="SM00471">
    <property type="entry name" value="HDc"/>
    <property type="match status" value="1"/>
</dbReference>
<dbReference type="SMART" id="SM00322">
    <property type="entry name" value="KH"/>
    <property type="match status" value="1"/>
</dbReference>
<dbReference type="SUPFAM" id="SSF54791">
    <property type="entry name" value="Eukaryotic type KH-domain (KH-domain type I)"/>
    <property type="match status" value="1"/>
</dbReference>
<dbReference type="SUPFAM" id="SSF109604">
    <property type="entry name" value="HD-domain/PDEase-like"/>
    <property type="match status" value="1"/>
</dbReference>
<dbReference type="PROSITE" id="PS51831">
    <property type="entry name" value="HD"/>
    <property type="match status" value="1"/>
</dbReference>
<dbReference type="PROSITE" id="PS50084">
    <property type="entry name" value="KH_TYPE_1"/>
    <property type="match status" value="1"/>
</dbReference>
<sequence length="542" mass="59585">MLIALIAVSVLAVAAIIGSLADRRAIGRRAERAESERDVKALELSRSQERLSRASQDLADSRKDVAKARAELESSRTRASDEARRADNADQARRSAEALLEINRRSVEELTERDHRLQEARRHLEEGLDKIEQDRLELAERSSQLDERDAELDRRHGQIVTELERVAGMSLDEARDELVEHLGREARVFAENSARAIVTEATASAEAKARHIVAEVIQRCSSEMVADTVVSVVPLPSNEMKGRVIGREGRNIRTFEQVTGVTVIIDDTPEIVLLSCFDPMRREVARQALTDLVEDGRIHPISIERAHQRAVDRIEDMCLDAAADALSRAGIDDIDDRLLPILGSLRFRTSYGQQVLDHCVECARLAANLAAEIGADIEICRRAAFLHDLGKSLTPGVEGSSHAAIGAELARRYGESEEVIHAIAAHHDEIDPVSVTDFIVKAADAISAARPGARRESLEAHVRRMDTIEEIATSFPGVVRAFALQAGREMQILVDPGAVDDHQASRLARQIALAIGEQVTVPGRTRVTVIRSFQAIETVGDA</sequence>
<proteinExistence type="inferred from homology"/>
<feature type="chain" id="PRO_0000344924" description="Ribonuclease Y">
    <location>
        <begin position="1"/>
        <end position="542"/>
    </location>
</feature>
<feature type="transmembrane region" description="Helical" evidence="1">
    <location>
        <begin position="1"/>
        <end position="21"/>
    </location>
</feature>
<feature type="domain" description="KH" evidence="1">
    <location>
        <begin position="229"/>
        <end position="289"/>
    </location>
</feature>
<feature type="domain" description="HD" evidence="2">
    <location>
        <begin position="355"/>
        <end position="449"/>
    </location>
</feature>
<feature type="region of interest" description="Disordered" evidence="3">
    <location>
        <begin position="52"/>
        <end position="92"/>
    </location>
</feature>
<feature type="compositionally biased region" description="Basic and acidic residues" evidence="3">
    <location>
        <begin position="59"/>
        <end position="92"/>
    </location>
</feature>
<comment type="function">
    <text evidence="1">Endoribonuclease that initiates mRNA decay.</text>
</comment>
<comment type="subcellular location">
    <subcellularLocation>
        <location evidence="1">Cell membrane</location>
        <topology evidence="1">Single-pass membrane protein</topology>
    </subcellularLocation>
</comment>
<comment type="similarity">
    <text evidence="1">Belongs to the RNase Y family.</text>
</comment>
<gene>
    <name evidence="1" type="primary">rny</name>
    <name type="ordered locus">PPA1014</name>
</gene>
<accession>Q6A900</accession>
<protein>
    <recommendedName>
        <fullName evidence="1">Ribonuclease Y</fullName>
        <shortName evidence="1">RNase Y</shortName>
        <ecNumber evidence="1">3.1.-.-</ecNumber>
    </recommendedName>
</protein>
<keyword id="KW-1003">Cell membrane</keyword>
<keyword id="KW-0255">Endonuclease</keyword>
<keyword id="KW-0378">Hydrolase</keyword>
<keyword id="KW-0472">Membrane</keyword>
<keyword id="KW-0540">Nuclease</keyword>
<keyword id="KW-0694">RNA-binding</keyword>
<keyword id="KW-0812">Transmembrane</keyword>
<keyword id="KW-1133">Transmembrane helix</keyword>
<name>RNY_CUTAK</name>
<evidence type="ECO:0000255" key="1">
    <source>
        <dbReference type="HAMAP-Rule" id="MF_00335"/>
    </source>
</evidence>
<evidence type="ECO:0000255" key="2">
    <source>
        <dbReference type="PROSITE-ProRule" id="PRU01175"/>
    </source>
</evidence>
<evidence type="ECO:0000256" key="3">
    <source>
        <dbReference type="SAM" id="MobiDB-lite"/>
    </source>
</evidence>
<organism>
    <name type="scientific">Cutibacterium acnes (strain DSM 16379 / KPA171202)</name>
    <name type="common">Propionibacterium acnes</name>
    <dbReference type="NCBI Taxonomy" id="267747"/>
    <lineage>
        <taxon>Bacteria</taxon>
        <taxon>Bacillati</taxon>
        <taxon>Actinomycetota</taxon>
        <taxon>Actinomycetes</taxon>
        <taxon>Propionibacteriales</taxon>
        <taxon>Propionibacteriaceae</taxon>
        <taxon>Cutibacterium</taxon>
    </lineage>
</organism>